<reference key="1">
    <citation type="journal article" date="2007" name="J. Bacteriol.">
        <title>The complete genome sequence of Roseobacter denitrificans reveals a mixotrophic rather than photosynthetic metabolism.</title>
        <authorList>
            <person name="Swingley W.D."/>
            <person name="Sadekar S."/>
            <person name="Mastrian S.D."/>
            <person name="Matthies H.J."/>
            <person name="Hao J."/>
            <person name="Ramos H."/>
            <person name="Acharya C.R."/>
            <person name="Conrad A.L."/>
            <person name="Taylor H.L."/>
            <person name="Dejesa L.C."/>
            <person name="Shah M.K."/>
            <person name="O'Huallachain M.E."/>
            <person name="Lince M.T."/>
            <person name="Blankenship R.E."/>
            <person name="Beatty J.T."/>
            <person name="Touchman J.W."/>
        </authorList>
    </citation>
    <scope>NUCLEOTIDE SEQUENCE [LARGE SCALE GENOMIC DNA]</scope>
    <source>
        <strain>ATCC 33942 / OCh 114</strain>
    </source>
</reference>
<gene>
    <name evidence="1" type="primary">glmU</name>
    <name type="ordered locus">RD1_3304</name>
</gene>
<proteinExistence type="inferred from homology"/>
<organism>
    <name type="scientific">Roseobacter denitrificans (strain ATCC 33942 / OCh 114)</name>
    <name type="common">Erythrobacter sp. (strain OCh 114)</name>
    <name type="synonym">Roseobacter denitrificans</name>
    <dbReference type="NCBI Taxonomy" id="375451"/>
    <lineage>
        <taxon>Bacteria</taxon>
        <taxon>Pseudomonadati</taxon>
        <taxon>Pseudomonadota</taxon>
        <taxon>Alphaproteobacteria</taxon>
        <taxon>Rhodobacterales</taxon>
        <taxon>Roseobacteraceae</taxon>
        <taxon>Roseobacter</taxon>
    </lineage>
</organism>
<evidence type="ECO:0000255" key="1">
    <source>
        <dbReference type="HAMAP-Rule" id="MF_01631"/>
    </source>
</evidence>
<comment type="function">
    <text evidence="1">Catalyzes the last two sequential reactions in the de novo biosynthetic pathway for UDP-N-acetylglucosamine (UDP-GlcNAc). The C-terminal domain catalyzes the transfer of acetyl group from acetyl coenzyme A to glucosamine-1-phosphate (GlcN-1-P) to produce N-acetylglucosamine-1-phosphate (GlcNAc-1-P), which is converted into UDP-GlcNAc by the transfer of uridine 5-monophosphate (from uridine 5-triphosphate), a reaction catalyzed by the N-terminal domain.</text>
</comment>
<comment type="catalytic activity">
    <reaction evidence="1">
        <text>alpha-D-glucosamine 1-phosphate + acetyl-CoA = N-acetyl-alpha-D-glucosamine 1-phosphate + CoA + H(+)</text>
        <dbReference type="Rhea" id="RHEA:13725"/>
        <dbReference type="ChEBI" id="CHEBI:15378"/>
        <dbReference type="ChEBI" id="CHEBI:57287"/>
        <dbReference type="ChEBI" id="CHEBI:57288"/>
        <dbReference type="ChEBI" id="CHEBI:57776"/>
        <dbReference type="ChEBI" id="CHEBI:58516"/>
        <dbReference type="EC" id="2.3.1.157"/>
    </reaction>
</comment>
<comment type="catalytic activity">
    <reaction evidence="1">
        <text>N-acetyl-alpha-D-glucosamine 1-phosphate + UTP + H(+) = UDP-N-acetyl-alpha-D-glucosamine + diphosphate</text>
        <dbReference type="Rhea" id="RHEA:13509"/>
        <dbReference type="ChEBI" id="CHEBI:15378"/>
        <dbReference type="ChEBI" id="CHEBI:33019"/>
        <dbReference type="ChEBI" id="CHEBI:46398"/>
        <dbReference type="ChEBI" id="CHEBI:57705"/>
        <dbReference type="ChEBI" id="CHEBI:57776"/>
        <dbReference type="EC" id="2.7.7.23"/>
    </reaction>
</comment>
<comment type="cofactor">
    <cofactor evidence="1">
        <name>Mg(2+)</name>
        <dbReference type="ChEBI" id="CHEBI:18420"/>
    </cofactor>
    <text evidence="1">Binds 1 Mg(2+) ion per subunit.</text>
</comment>
<comment type="pathway">
    <text evidence="1">Nucleotide-sugar biosynthesis; UDP-N-acetyl-alpha-D-glucosamine biosynthesis; N-acetyl-alpha-D-glucosamine 1-phosphate from alpha-D-glucosamine 6-phosphate (route II): step 2/2.</text>
</comment>
<comment type="pathway">
    <text evidence="1">Nucleotide-sugar biosynthesis; UDP-N-acetyl-alpha-D-glucosamine biosynthesis; UDP-N-acetyl-alpha-D-glucosamine from N-acetyl-alpha-D-glucosamine 1-phosphate: step 1/1.</text>
</comment>
<comment type="pathway">
    <text evidence="1">Bacterial outer membrane biogenesis; LPS lipid A biosynthesis.</text>
</comment>
<comment type="subunit">
    <text evidence="1">Homotrimer.</text>
</comment>
<comment type="subcellular location">
    <subcellularLocation>
        <location evidence="1">Cytoplasm</location>
    </subcellularLocation>
</comment>
<comment type="similarity">
    <text evidence="1">In the N-terminal section; belongs to the N-acetylglucosamine-1-phosphate uridyltransferase family.</text>
</comment>
<comment type="similarity">
    <text evidence="1">In the C-terminal section; belongs to the transferase hexapeptide repeat family.</text>
</comment>
<keyword id="KW-0012">Acyltransferase</keyword>
<keyword id="KW-0133">Cell shape</keyword>
<keyword id="KW-0961">Cell wall biogenesis/degradation</keyword>
<keyword id="KW-0963">Cytoplasm</keyword>
<keyword id="KW-0460">Magnesium</keyword>
<keyword id="KW-0479">Metal-binding</keyword>
<keyword id="KW-0511">Multifunctional enzyme</keyword>
<keyword id="KW-0548">Nucleotidyltransferase</keyword>
<keyword id="KW-0573">Peptidoglycan synthesis</keyword>
<keyword id="KW-1185">Reference proteome</keyword>
<keyword id="KW-0677">Repeat</keyword>
<keyword id="KW-0808">Transferase</keyword>
<accession>Q163N8</accession>
<name>GLMU_ROSDO</name>
<dbReference type="EC" id="2.7.7.23" evidence="1"/>
<dbReference type="EC" id="2.3.1.157" evidence="1"/>
<dbReference type="EMBL" id="CP000362">
    <property type="protein sequence ID" value="ABG32805.1"/>
    <property type="molecule type" value="Genomic_DNA"/>
</dbReference>
<dbReference type="RefSeq" id="WP_011569421.1">
    <property type="nucleotide sequence ID" value="NC_008209.1"/>
</dbReference>
<dbReference type="SMR" id="Q163N8"/>
<dbReference type="STRING" id="375451.RD1_3304"/>
<dbReference type="KEGG" id="rde:RD1_3304"/>
<dbReference type="eggNOG" id="COG1207">
    <property type="taxonomic scope" value="Bacteria"/>
</dbReference>
<dbReference type="HOGENOM" id="CLU_029499_15_2_5"/>
<dbReference type="OrthoDB" id="9775031at2"/>
<dbReference type="UniPathway" id="UPA00113">
    <property type="reaction ID" value="UER00532"/>
</dbReference>
<dbReference type="UniPathway" id="UPA00113">
    <property type="reaction ID" value="UER00533"/>
</dbReference>
<dbReference type="UniPathway" id="UPA00973"/>
<dbReference type="Proteomes" id="UP000007029">
    <property type="component" value="Chromosome"/>
</dbReference>
<dbReference type="GO" id="GO:0005737">
    <property type="term" value="C:cytoplasm"/>
    <property type="evidence" value="ECO:0007669"/>
    <property type="project" value="UniProtKB-SubCell"/>
</dbReference>
<dbReference type="GO" id="GO:0016020">
    <property type="term" value="C:membrane"/>
    <property type="evidence" value="ECO:0007669"/>
    <property type="project" value="GOC"/>
</dbReference>
<dbReference type="GO" id="GO:0019134">
    <property type="term" value="F:glucosamine-1-phosphate N-acetyltransferase activity"/>
    <property type="evidence" value="ECO:0007669"/>
    <property type="project" value="UniProtKB-UniRule"/>
</dbReference>
<dbReference type="GO" id="GO:0000287">
    <property type="term" value="F:magnesium ion binding"/>
    <property type="evidence" value="ECO:0007669"/>
    <property type="project" value="UniProtKB-UniRule"/>
</dbReference>
<dbReference type="GO" id="GO:0003977">
    <property type="term" value="F:UDP-N-acetylglucosamine diphosphorylase activity"/>
    <property type="evidence" value="ECO:0007669"/>
    <property type="project" value="UniProtKB-UniRule"/>
</dbReference>
<dbReference type="GO" id="GO:0000902">
    <property type="term" value="P:cell morphogenesis"/>
    <property type="evidence" value="ECO:0007669"/>
    <property type="project" value="UniProtKB-UniRule"/>
</dbReference>
<dbReference type="GO" id="GO:0071555">
    <property type="term" value="P:cell wall organization"/>
    <property type="evidence" value="ECO:0007669"/>
    <property type="project" value="UniProtKB-KW"/>
</dbReference>
<dbReference type="GO" id="GO:0009245">
    <property type="term" value="P:lipid A biosynthetic process"/>
    <property type="evidence" value="ECO:0007669"/>
    <property type="project" value="UniProtKB-UniRule"/>
</dbReference>
<dbReference type="GO" id="GO:0009252">
    <property type="term" value="P:peptidoglycan biosynthetic process"/>
    <property type="evidence" value="ECO:0007669"/>
    <property type="project" value="UniProtKB-UniRule"/>
</dbReference>
<dbReference type="GO" id="GO:0008360">
    <property type="term" value="P:regulation of cell shape"/>
    <property type="evidence" value="ECO:0007669"/>
    <property type="project" value="UniProtKB-KW"/>
</dbReference>
<dbReference type="GO" id="GO:0006048">
    <property type="term" value="P:UDP-N-acetylglucosamine biosynthetic process"/>
    <property type="evidence" value="ECO:0007669"/>
    <property type="project" value="UniProtKB-UniPathway"/>
</dbReference>
<dbReference type="CDD" id="cd02540">
    <property type="entry name" value="GT2_GlmU_N_bac"/>
    <property type="match status" value="1"/>
</dbReference>
<dbReference type="CDD" id="cd03353">
    <property type="entry name" value="LbH_GlmU_C"/>
    <property type="match status" value="1"/>
</dbReference>
<dbReference type="Gene3D" id="2.160.10.10">
    <property type="entry name" value="Hexapeptide repeat proteins"/>
    <property type="match status" value="1"/>
</dbReference>
<dbReference type="Gene3D" id="3.90.550.10">
    <property type="entry name" value="Spore Coat Polysaccharide Biosynthesis Protein SpsA, Chain A"/>
    <property type="match status" value="1"/>
</dbReference>
<dbReference type="HAMAP" id="MF_01631">
    <property type="entry name" value="GlmU"/>
    <property type="match status" value="1"/>
</dbReference>
<dbReference type="InterPro" id="IPR005882">
    <property type="entry name" value="Bifunctional_GlmU"/>
</dbReference>
<dbReference type="InterPro" id="IPR050065">
    <property type="entry name" value="GlmU-like"/>
</dbReference>
<dbReference type="InterPro" id="IPR038009">
    <property type="entry name" value="GlmU_C_LbH"/>
</dbReference>
<dbReference type="InterPro" id="IPR001451">
    <property type="entry name" value="Hexapep"/>
</dbReference>
<dbReference type="InterPro" id="IPR025877">
    <property type="entry name" value="MobA-like_NTP_Trfase"/>
</dbReference>
<dbReference type="InterPro" id="IPR029044">
    <property type="entry name" value="Nucleotide-diphossugar_trans"/>
</dbReference>
<dbReference type="InterPro" id="IPR011004">
    <property type="entry name" value="Trimer_LpxA-like_sf"/>
</dbReference>
<dbReference type="NCBIfam" id="TIGR01173">
    <property type="entry name" value="glmU"/>
    <property type="match status" value="1"/>
</dbReference>
<dbReference type="NCBIfam" id="NF010933">
    <property type="entry name" value="PRK14353.1"/>
    <property type="match status" value="1"/>
</dbReference>
<dbReference type="PANTHER" id="PTHR43584:SF3">
    <property type="entry name" value="BIFUNCTIONAL PROTEIN GLMU"/>
    <property type="match status" value="1"/>
</dbReference>
<dbReference type="PANTHER" id="PTHR43584">
    <property type="entry name" value="NUCLEOTIDYL TRANSFERASE"/>
    <property type="match status" value="1"/>
</dbReference>
<dbReference type="Pfam" id="PF00132">
    <property type="entry name" value="Hexapep"/>
    <property type="match status" value="2"/>
</dbReference>
<dbReference type="Pfam" id="PF12804">
    <property type="entry name" value="NTP_transf_3"/>
    <property type="match status" value="1"/>
</dbReference>
<dbReference type="SUPFAM" id="SSF53448">
    <property type="entry name" value="Nucleotide-diphospho-sugar transferases"/>
    <property type="match status" value="1"/>
</dbReference>
<dbReference type="SUPFAM" id="SSF51161">
    <property type="entry name" value="Trimeric LpxA-like enzymes"/>
    <property type="match status" value="1"/>
</dbReference>
<sequence>MKTALVILAAGKGTRMNSDLPKVLHPLAGAPLLIHAMQSGASLGPSRTVIVAGHGAELVQKAALSHDASAIIVQQTEQLGTGHAAKQAQDALKGFDGTVVVLFGDTPFVSPDTLSAICDAQRSADVVVLGFEAADPARYGRLVMDGAQLDRIVEYKDATEAERAITLCNSGVVACNGTRLFELLEAVDNDNAAGEFYLPDIVGVARARGLTAAVVTCDESETLGINSRTELSAAEAAFQERARTNAFENGVTLPAPGTVHFAFDTVVGRDTLIEPNVVFGPGVTIESGATIRAFSHLEGCHVARGSVVGPYARLRPGAELSENVRVGNFVEVKNARIGTGTKINHLSYIGDATLGEYTNVGAGTITCNYDGVLKHHTEIGNHVFIGSNTMLVAPVQIGDHAMTGSGSVITSDVEPEALALSRAPQIEKPGMATKIINLLRAKKAKQQRGS</sequence>
<feature type="chain" id="PRO_0000263151" description="Bifunctional protein GlmU">
    <location>
        <begin position="1"/>
        <end position="450"/>
    </location>
</feature>
<feature type="region of interest" description="Pyrophosphorylase" evidence="1">
    <location>
        <begin position="1"/>
        <end position="228"/>
    </location>
</feature>
<feature type="region of interest" description="Linker" evidence="1">
    <location>
        <begin position="229"/>
        <end position="249"/>
    </location>
</feature>
<feature type="region of interest" description="N-acetyltransferase" evidence="1">
    <location>
        <begin position="250"/>
        <end position="450"/>
    </location>
</feature>
<feature type="active site" description="Proton acceptor" evidence="1">
    <location>
        <position position="345"/>
    </location>
</feature>
<feature type="binding site" evidence="1">
    <location>
        <begin position="8"/>
        <end position="11"/>
    </location>
    <ligand>
        <name>UDP-N-acetyl-alpha-D-glucosamine</name>
        <dbReference type="ChEBI" id="CHEBI:57705"/>
    </ligand>
</feature>
<feature type="binding site" evidence="1">
    <location>
        <position position="22"/>
    </location>
    <ligand>
        <name>UDP-N-acetyl-alpha-D-glucosamine</name>
        <dbReference type="ChEBI" id="CHEBI:57705"/>
    </ligand>
</feature>
<feature type="binding site" evidence="1">
    <location>
        <position position="75"/>
    </location>
    <ligand>
        <name>UDP-N-acetyl-alpha-D-glucosamine</name>
        <dbReference type="ChEBI" id="CHEBI:57705"/>
    </ligand>
</feature>
<feature type="binding site" evidence="1">
    <location>
        <begin position="80"/>
        <end position="81"/>
    </location>
    <ligand>
        <name>UDP-N-acetyl-alpha-D-glucosamine</name>
        <dbReference type="ChEBI" id="CHEBI:57705"/>
    </ligand>
</feature>
<feature type="binding site" evidence="1">
    <location>
        <position position="105"/>
    </location>
    <ligand>
        <name>Mg(2+)</name>
        <dbReference type="ChEBI" id="CHEBI:18420"/>
    </ligand>
</feature>
<feature type="binding site" evidence="1">
    <location>
        <position position="140"/>
    </location>
    <ligand>
        <name>UDP-N-acetyl-alpha-D-glucosamine</name>
        <dbReference type="ChEBI" id="CHEBI:57705"/>
    </ligand>
</feature>
<feature type="binding site" evidence="1">
    <location>
        <position position="154"/>
    </location>
    <ligand>
        <name>UDP-N-acetyl-alpha-D-glucosamine</name>
        <dbReference type="ChEBI" id="CHEBI:57705"/>
    </ligand>
</feature>
<feature type="binding site" evidence="1">
    <location>
        <position position="169"/>
    </location>
    <ligand>
        <name>UDP-N-acetyl-alpha-D-glucosamine</name>
        <dbReference type="ChEBI" id="CHEBI:57705"/>
    </ligand>
</feature>
<feature type="binding site" evidence="1">
    <location>
        <position position="226"/>
    </location>
    <ligand>
        <name>Mg(2+)</name>
        <dbReference type="ChEBI" id="CHEBI:18420"/>
    </ligand>
</feature>
<feature type="binding site" evidence="1">
    <location>
        <position position="226"/>
    </location>
    <ligand>
        <name>UDP-N-acetyl-alpha-D-glucosamine</name>
        <dbReference type="ChEBI" id="CHEBI:57705"/>
    </ligand>
</feature>
<feature type="binding site" evidence="1">
    <location>
        <position position="315"/>
    </location>
    <ligand>
        <name>UDP-N-acetyl-alpha-D-glucosamine</name>
        <dbReference type="ChEBI" id="CHEBI:57705"/>
    </ligand>
</feature>
<feature type="binding site" evidence="1">
    <location>
        <position position="333"/>
    </location>
    <ligand>
        <name>UDP-N-acetyl-alpha-D-glucosamine</name>
        <dbReference type="ChEBI" id="CHEBI:57705"/>
    </ligand>
</feature>
<feature type="binding site" evidence="1">
    <location>
        <position position="348"/>
    </location>
    <ligand>
        <name>UDP-N-acetyl-alpha-D-glucosamine</name>
        <dbReference type="ChEBI" id="CHEBI:57705"/>
    </ligand>
</feature>
<feature type="binding site" evidence="1">
    <location>
        <position position="359"/>
    </location>
    <ligand>
        <name>UDP-N-acetyl-alpha-D-glucosamine</name>
        <dbReference type="ChEBI" id="CHEBI:57705"/>
    </ligand>
</feature>
<feature type="binding site" evidence="1">
    <location>
        <position position="362"/>
    </location>
    <ligand>
        <name>acetyl-CoA</name>
        <dbReference type="ChEBI" id="CHEBI:57288"/>
    </ligand>
</feature>
<feature type="binding site" evidence="1">
    <location>
        <begin position="368"/>
        <end position="369"/>
    </location>
    <ligand>
        <name>acetyl-CoA</name>
        <dbReference type="ChEBI" id="CHEBI:57288"/>
    </ligand>
</feature>
<feature type="binding site" evidence="1">
    <location>
        <position position="387"/>
    </location>
    <ligand>
        <name>acetyl-CoA</name>
        <dbReference type="ChEBI" id="CHEBI:57288"/>
    </ligand>
</feature>
<feature type="binding site" evidence="1">
    <location>
        <position position="405"/>
    </location>
    <ligand>
        <name>acetyl-CoA</name>
        <dbReference type="ChEBI" id="CHEBI:57288"/>
    </ligand>
</feature>
<feature type="binding site" evidence="1">
    <location>
        <position position="422"/>
    </location>
    <ligand>
        <name>acetyl-CoA</name>
        <dbReference type="ChEBI" id="CHEBI:57288"/>
    </ligand>
</feature>
<protein>
    <recommendedName>
        <fullName evidence="1">Bifunctional protein GlmU</fullName>
    </recommendedName>
    <domain>
        <recommendedName>
            <fullName evidence="1">UDP-N-acetylglucosamine pyrophosphorylase</fullName>
            <ecNumber evidence="1">2.7.7.23</ecNumber>
        </recommendedName>
        <alternativeName>
            <fullName evidence="1">N-acetylglucosamine-1-phosphate uridyltransferase</fullName>
        </alternativeName>
    </domain>
    <domain>
        <recommendedName>
            <fullName evidence="1">Glucosamine-1-phosphate N-acetyltransferase</fullName>
            <ecNumber evidence="1">2.3.1.157</ecNumber>
        </recommendedName>
    </domain>
</protein>